<feature type="chain" id="PRO_0000296188" description="Protein NLRC3">
    <location>
        <begin position="1"/>
        <end position="1064"/>
    </location>
</feature>
<feature type="domain" description="NACHT" evidence="2">
    <location>
        <begin position="138"/>
        <end position="459"/>
    </location>
</feature>
<feature type="repeat" description="LRR 1">
    <location>
        <begin position="338"/>
        <end position="362"/>
    </location>
</feature>
<feature type="repeat" description="LRR 2">
    <location>
        <begin position="570"/>
        <end position="593"/>
    </location>
</feature>
<feature type="repeat" description="LRR 3">
    <location>
        <begin position="632"/>
        <end position="662"/>
    </location>
</feature>
<feature type="repeat" description="LRR 4">
    <location>
        <begin position="664"/>
        <end position="687"/>
    </location>
</feature>
<feature type="repeat" description="LRR 5">
    <location>
        <begin position="692"/>
        <end position="715"/>
    </location>
</feature>
<feature type="repeat" description="LRR 6">
    <location>
        <begin position="720"/>
        <end position="743"/>
    </location>
</feature>
<feature type="repeat" description="LRR 7">
    <location>
        <begin position="748"/>
        <end position="771"/>
    </location>
</feature>
<feature type="repeat" description="LRR 8">
    <location>
        <begin position="776"/>
        <end position="799"/>
    </location>
</feature>
<feature type="repeat" description="LRR 9">
    <location>
        <begin position="804"/>
        <end position="827"/>
    </location>
</feature>
<feature type="repeat" description="LRR 10">
    <location>
        <begin position="832"/>
        <end position="855"/>
    </location>
</feature>
<feature type="repeat" description="LRR 11">
    <location>
        <begin position="860"/>
        <end position="883"/>
    </location>
</feature>
<feature type="repeat" description="LRR 12">
    <location>
        <begin position="888"/>
        <end position="911"/>
    </location>
</feature>
<feature type="repeat" description="LRR 13">
    <location>
        <begin position="916"/>
        <end position="939"/>
    </location>
</feature>
<feature type="repeat" description="LRR 14">
    <location>
        <begin position="972"/>
        <end position="995"/>
    </location>
</feature>
<feature type="repeat" description="LRR 15">
    <location>
        <begin position="1000"/>
        <end position="1022"/>
    </location>
</feature>
<feature type="repeat" description="LRR 16">
    <location>
        <begin position="1028"/>
        <end position="1051"/>
    </location>
</feature>
<feature type="binding site" evidence="2">
    <location>
        <begin position="144"/>
        <end position="151"/>
    </location>
    <ligand>
        <name>ATP</name>
        <dbReference type="ChEBI" id="CHEBI:30616"/>
    </ligand>
</feature>
<feature type="splice variant" id="VSP_027139" description="In isoform 3 and isoform 4." evidence="7">
    <location>
        <begin position="1"/>
        <end position="667"/>
    </location>
</feature>
<feature type="splice variant" id="VSP_027140" description="In isoform 5." evidence="6">
    <location>
        <begin position="1"/>
        <end position="636"/>
    </location>
</feature>
<feature type="splice variant" id="VSP_027141" description="In isoform 2." evidence="7">
    <original>MRRRYSHDPPGSFRETKVFGFRGEYGC</original>
    <variation>MQAEPFSTLEQPPWQEGDNIGSPGSVLALYSQLLAANTDSTRKQEVWTDRETCLAYSVGSPAEQV</variation>
    <location>
        <begin position="1"/>
        <end position="27"/>
    </location>
</feature>
<feature type="splice variant" id="VSP_027142" description="In isoform 5." evidence="6">
    <original>YCQSL</original>
    <variation>MAPLP</variation>
    <location>
        <begin position="637"/>
        <end position="641"/>
    </location>
</feature>
<feature type="splice variant" id="VSP_027143" description="In isoform 2." evidence="7">
    <original>LDNNQFQDPVMELLGSVLSGKDCRIRKISLAENQIGNKGAKALARS</original>
    <variation>WVWGPCRERAKEKEPLEWFLASSHPFPCSLLRLLEFHSWVLSHHSN</variation>
    <location>
        <begin position="643"/>
        <end position="688"/>
    </location>
</feature>
<feature type="splice variant" id="VSP_027144" description="In isoform 3 and isoform 4." evidence="7">
    <original>RKI</original>
    <variation>MAG</variation>
    <location>
        <begin position="668"/>
        <end position="670"/>
    </location>
</feature>
<feature type="splice variant" id="VSP_027145" description="In isoform 2." evidence="7">
    <location>
        <begin position="689"/>
        <end position="1064"/>
    </location>
</feature>
<feature type="splice variant" id="VSP_027146" description="In isoform 5." evidence="6">
    <original>RENSISPEGAQALTQALCRNNTLKHLDLTANLLHD</original>
    <variation>MSPQPARKLHQPRGSPGPHSSSLQEQHSEALGPDS</variation>
    <location>
        <begin position="841"/>
        <end position="875"/>
    </location>
</feature>
<feature type="splice variant" id="VSP_027147" description="In isoform 5." evidence="6">
    <location>
        <begin position="876"/>
        <end position="1064"/>
    </location>
</feature>
<feature type="splice variant" id="VSP_027148" description="In isoform 4." evidence="7">
    <original>D</original>
    <variation>E</variation>
    <location>
        <position position="979"/>
    </location>
</feature>
<feature type="splice variant" id="VSP_027149" description="In isoform 4." evidence="7">
    <location>
        <begin position="980"/>
        <end position="1064"/>
    </location>
</feature>
<accession>Q5DU56</accession>
<accession>A1L3P6</accession>
<accession>Q3TAB7</accession>
<accession>Q8BJF4</accession>
<accession>Q8BV65</accession>
<proteinExistence type="evidence at protein level"/>
<keyword id="KW-0025">Alternative splicing</keyword>
<keyword id="KW-0067">ATP-binding</keyword>
<keyword id="KW-0963">Cytoplasm</keyword>
<keyword id="KW-0433">Leucine-rich repeat</keyword>
<keyword id="KW-0547">Nucleotide-binding</keyword>
<keyword id="KW-1185">Reference proteome</keyword>
<keyword id="KW-0677">Repeat</keyword>
<evidence type="ECO:0000250" key="1">
    <source>
        <dbReference type="UniProtKB" id="Q7RTR2"/>
    </source>
</evidence>
<evidence type="ECO:0000255" key="2">
    <source>
        <dbReference type="PROSITE-ProRule" id="PRU00136"/>
    </source>
</evidence>
<evidence type="ECO:0000269" key="3">
    <source>
    </source>
</evidence>
<evidence type="ECO:0000269" key="4">
    <source>
    </source>
</evidence>
<evidence type="ECO:0000269" key="5">
    <source>
    </source>
</evidence>
<evidence type="ECO:0000303" key="6">
    <source>
    </source>
</evidence>
<evidence type="ECO:0000303" key="7">
    <source>
    </source>
</evidence>
<evidence type="ECO:0000305" key="8"/>
<dbReference type="EMBL" id="AK220314">
    <property type="protein sequence ID" value="BAD90390.1"/>
    <property type="status" value="ALT_INIT"/>
    <property type="molecule type" value="mRNA"/>
</dbReference>
<dbReference type="EMBL" id="AK079766">
    <property type="protein sequence ID" value="BAC37747.1"/>
    <property type="molecule type" value="mRNA"/>
</dbReference>
<dbReference type="EMBL" id="AK084199">
    <property type="protein sequence ID" value="BAC39136.1"/>
    <property type="molecule type" value="mRNA"/>
</dbReference>
<dbReference type="EMBL" id="AK171971">
    <property type="protein sequence ID" value="BAE42752.1"/>
    <property type="molecule type" value="mRNA"/>
</dbReference>
<dbReference type="EMBL" id="BC130223">
    <property type="protein sequence ID" value="AAI30224.1"/>
    <property type="molecule type" value="mRNA"/>
</dbReference>
<dbReference type="CCDS" id="CCDS70677.1">
    <molecule id="Q5DU56-3"/>
</dbReference>
<dbReference type="RefSeq" id="NP_780756.1">
    <molecule id="Q5DU56-3"/>
    <property type="nucleotide sequence ID" value="NM_175547.4"/>
</dbReference>
<dbReference type="SMR" id="Q5DU56"/>
<dbReference type="FunCoup" id="Q5DU56">
    <property type="interactions" value="864"/>
</dbReference>
<dbReference type="STRING" id="10090.ENSMUSP00000137628"/>
<dbReference type="PhosphoSitePlus" id="Q5DU56"/>
<dbReference type="PaxDb" id="10090-ENSMUSP00000137628"/>
<dbReference type="ProteomicsDB" id="252906">
    <molecule id="Q5DU56-1"/>
</dbReference>
<dbReference type="ProteomicsDB" id="252907">
    <molecule id="Q5DU56-2"/>
</dbReference>
<dbReference type="ProteomicsDB" id="252908">
    <molecule id="Q5DU56-3"/>
</dbReference>
<dbReference type="ProteomicsDB" id="252909">
    <molecule id="Q5DU56-4"/>
</dbReference>
<dbReference type="ProteomicsDB" id="252910">
    <molecule id="Q5DU56-5"/>
</dbReference>
<dbReference type="Antibodypedia" id="56241">
    <property type="antibodies" value="48 antibodies from 20 providers"/>
</dbReference>
<dbReference type="DNASU" id="268857"/>
<dbReference type="Ensembl" id="ENSMUST00000180200.8">
    <molecule id="Q5DU56-3"/>
    <property type="protein sequence ID" value="ENSMUSP00000137325.2"/>
    <property type="gene ID" value="ENSMUSG00000049871.15"/>
</dbReference>
<dbReference type="GeneID" id="268857"/>
<dbReference type="KEGG" id="mmu:268857"/>
<dbReference type="UCSC" id="uc007xzd.1">
    <molecule id="Q5DU56-3"/>
    <property type="organism name" value="mouse"/>
</dbReference>
<dbReference type="UCSC" id="uc007xze.1">
    <molecule id="Q5DU56-4"/>
    <property type="organism name" value="mouse"/>
</dbReference>
<dbReference type="AGR" id="MGI:2444070"/>
<dbReference type="CTD" id="197358"/>
<dbReference type="MGI" id="MGI:2444070">
    <property type="gene designation" value="Nlrc3"/>
</dbReference>
<dbReference type="VEuPathDB" id="HostDB:ENSMUSG00000049871"/>
<dbReference type="eggNOG" id="KOG4308">
    <property type="taxonomic scope" value="Eukaryota"/>
</dbReference>
<dbReference type="GeneTree" id="ENSGT00940000159861"/>
<dbReference type="HOGENOM" id="CLU_017147_4_1_1"/>
<dbReference type="InParanoid" id="Q5DU56"/>
<dbReference type="PhylomeDB" id="Q5DU56"/>
<dbReference type="BioGRID-ORCS" id="268857">
    <property type="hits" value="2 hits in 78 CRISPR screens"/>
</dbReference>
<dbReference type="PRO" id="PR:Q5DU56"/>
<dbReference type="Proteomes" id="UP000000589">
    <property type="component" value="Chromosome 16"/>
</dbReference>
<dbReference type="RNAct" id="Q5DU56">
    <property type="molecule type" value="protein"/>
</dbReference>
<dbReference type="Bgee" id="ENSMUSG00000049871">
    <property type="expression patterns" value="Expressed in peripheral lymph node and 98 other cell types or tissues"/>
</dbReference>
<dbReference type="ExpressionAtlas" id="Q5DU56">
    <property type="expression patterns" value="baseline and differential"/>
</dbReference>
<dbReference type="GO" id="GO:0005737">
    <property type="term" value="C:cytoplasm"/>
    <property type="evidence" value="ECO:0000250"/>
    <property type="project" value="UniProtKB"/>
</dbReference>
<dbReference type="GO" id="GO:0048471">
    <property type="term" value="C:perinuclear region of cytoplasm"/>
    <property type="evidence" value="ECO:0000250"/>
    <property type="project" value="UniProtKB"/>
</dbReference>
<dbReference type="GO" id="GO:0005524">
    <property type="term" value="F:ATP binding"/>
    <property type="evidence" value="ECO:0007669"/>
    <property type="project" value="UniProtKB-KW"/>
</dbReference>
<dbReference type="GO" id="GO:0140678">
    <property type="term" value="F:molecular function inhibitor activity"/>
    <property type="evidence" value="ECO:0000314"/>
    <property type="project" value="MGI"/>
</dbReference>
<dbReference type="GO" id="GO:0036312">
    <property type="term" value="F:phosphatidylinositol 3-kinase regulatory subunit binding"/>
    <property type="evidence" value="ECO:0000314"/>
    <property type="project" value="UniProtKB"/>
</dbReference>
<dbReference type="GO" id="GO:0007249">
    <property type="term" value="P:canonical NF-kappaB signal transduction"/>
    <property type="evidence" value="ECO:0000315"/>
    <property type="project" value="MGI"/>
</dbReference>
<dbReference type="GO" id="GO:0043124">
    <property type="term" value="P:negative regulation of canonical NF-kappaB signal transduction"/>
    <property type="evidence" value="ECO:0000314"/>
    <property type="project" value="MGI"/>
</dbReference>
<dbReference type="GO" id="GO:1900016">
    <property type="term" value="P:negative regulation of cytokine production involved in inflammatory response"/>
    <property type="evidence" value="ECO:0000315"/>
    <property type="project" value="UniProtKB"/>
</dbReference>
<dbReference type="GO" id="GO:0050680">
    <property type="term" value="P:negative regulation of epithelial cell proliferation"/>
    <property type="evidence" value="ECO:0000315"/>
    <property type="project" value="UniProtKB"/>
</dbReference>
<dbReference type="GO" id="GO:0048147">
    <property type="term" value="P:negative regulation of fibroblast proliferation"/>
    <property type="evidence" value="ECO:0000315"/>
    <property type="project" value="UniProtKB"/>
</dbReference>
<dbReference type="GO" id="GO:0050728">
    <property type="term" value="P:negative regulation of inflammatory response"/>
    <property type="evidence" value="ECO:0000315"/>
    <property type="project" value="UniProtKB"/>
</dbReference>
<dbReference type="GO" id="GO:0045824">
    <property type="term" value="P:negative regulation of innate immune response"/>
    <property type="evidence" value="ECO:0000315"/>
    <property type="project" value="UniProtKB"/>
</dbReference>
<dbReference type="GO" id="GO:0032687">
    <property type="term" value="P:negative regulation of interferon-alpha production"/>
    <property type="evidence" value="ECO:0000315"/>
    <property type="project" value="UniProtKB"/>
</dbReference>
<dbReference type="GO" id="GO:0032688">
    <property type="term" value="P:negative regulation of interferon-beta production"/>
    <property type="evidence" value="ECO:0000315"/>
    <property type="project" value="UniProtKB"/>
</dbReference>
<dbReference type="GO" id="GO:0032691">
    <property type="term" value="P:negative regulation of interleukin-1 beta production"/>
    <property type="evidence" value="ECO:0000315"/>
    <property type="project" value="CACAO"/>
</dbReference>
<dbReference type="GO" id="GO:0032695">
    <property type="term" value="P:negative regulation of interleukin-12 production"/>
    <property type="evidence" value="ECO:0000315"/>
    <property type="project" value="CACAO"/>
</dbReference>
<dbReference type="GO" id="GO:0032715">
    <property type="term" value="P:negative regulation of interleukin-6 production"/>
    <property type="evidence" value="ECO:0000315"/>
    <property type="project" value="UniProtKB"/>
</dbReference>
<dbReference type="GO" id="GO:1900226">
    <property type="term" value="P:negative regulation of NLRP3 inflammasome complex assembly"/>
    <property type="evidence" value="ECO:0000250"/>
    <property type="project" value="UniProtKB"/>
</dbReference>
<dbReference type="GO" id="GO:1901223">
    <property type="term" value="P:negative regulation of non-canonical NF-kappaB signal transduction"/>
    <property type="evidence" value="ECO:0000250"/>
    <property type="project" value="UniProtKB"/>
</dbReference>
<dbReference type="GO" id="GO:0051898">
    <property type="term" value="P:negative regulation of phosphatidylinositol 3-kinase/protein kinase B signal transduction"/>
    <property type="evidence" value="ECO:0000315"/>
    <property type="project" value="UniProtKB"/>
</dbReference>
<dbReference type="GO" id="GO:0032720">
    <property type="term" value="P:negative regulation of tumor necrosis factor production"/>
    <property type="evidence" value="ECO:0000315"/>
    <property type="project" value="CACAO"/>
</dbReference>
<dbReference type="GO" id="GO:0031396">
    <property type="term" value="P:regulation of protein ubiquitination"/>
    <property type="evidence" value="ECO:0000314"/>
    <property type="project" value="MGI"/>
</dbReference>
<dbReference type="GO" id="GO:0032496">
    <property type="term" value="P:response to lipopolysaccharide"/>
    <property type="evidence" value="ECO:0000315"/>
    <property type="project" value="MGI"/>
</dbReference>
<dbReference type="GO" id="GO:0042110">
    <property type="term" value="P:T cell activation"/>
    <property type="evidence" value="ECO:0000250"/>
    <property type="project" value="HGNC"/>
</dbReference>
<dbReference type="FunFam" id="3.40.50.300:FF:001062">
    <property type="entry name" value="NLR family CARD domain containing 3"/>
    <property type="match status" value="1"/>
</dbReference>
<dbReference type="FunFam" id="3.80.10.10:FF:000236">
    <property type="entry name" value="NLR family CARD domain containing 3"/>
    <property type="match status" value="1"/>
</dbReference>
<dbReference type="FunFam" id="3.80.10.10:FF:000274">
    <property type="entry name" value="NLR family CARD domain containing 3"/>
    <property type="match status" value="1"/>
</dbReference>
<dbReference type="FunFam" id="3.80.10.10:FF:001349">
    <property type="entry name" value="NLR family CARD domain containing 3"/>
    <property type="match status" value="1"/>
</dbReference>
<dbReference type="FunFam" id="3.80.10.10:FF:000483">
    <property type="entry name" value="NLR family, CARD domain-containing 3"/>
    <property type="match status" value="1"/>
</dbReference>
<dbReference type="Gene3D" id="3.40.50.300">
    <property type="entry name" value="P-loop containing nucleotide triphosphate hydrolases"/>
    <property type="match status" value="1"/>
</dbReference>
<dbReference type="Gene3D" id="3.80.10.10">
    <property type="entry name" value="Ribonuclease Inhibitor"/>
    <property type="match status" value="4"/>
</dbReference>
<dbReference type="InterPro" id="IPR001611">
    <property type="entry name" value="Leu-rich_rpt"/>
</dbReference>
<dbReference type="InterPro" id="IPR032675">
    <property type="entry name" value="LRR_dom_sf"/>
</dbReference>
<dbReference type="InterPro" id="IPR007111">
    <property type="entry name" value="NACHT_NTPase"/>
</dbReference>
<dbReference type="InterPro" id="IPR051261">
    <property type="entry name" value="NLR"/>
</dbReference>
<dbReference type="InterPro" id="IPR041267">
    <property type="entry name" value="NLRP_HD2"/>
</dbReference>
<dbReference type="InterPro" id="IPR041075">
    <property type="entry name" value="NOD1/2_WH"/>
</dbReference>
<dbReference type="InterPro" id="IPR027417">
    <property type="entry name" value="P-loop_NTPase"/>
</dbReference>
<dbReference type="PANTHER" id="PTHR24106">
    <property type="entry name" value="NACHT, LRR AND CARD DOMAINS-CONTAINING"/>
    <property type="match status" value="1"/>
</dbReference>
<dbReference type="Pfam" id="PF13516">
    <property type="entry name" value="LRR_6"/>
    <property type="match status" value="9"/>
</dbReference>
<dbReference type="Pfam" id="PF05729">
    <property type="entry name" value="NACHT"/>
    <property type="match status" value="1"/>
</dbReference>
<dbReference type="Pfam" id="PF17776">
    <property type="entry name" value="NLRC4_HD2"/>
    <property type="match status" value="1"/>
</dbReference>
<dbReference type="Pfam" id="PF17779">
    <property type="entry name" value="NOD2_WH"/>
    <property type="match status" value="1"/>
</dbReference>
<dbReference type="SMART" id="SM00368">
    <property type="entry name" value="LRR_RI"/>
    <property type="match status" value="14"/>
</dbReference>
<dbReference type="SUPFAM" id="SSF52540">
    <property type="entry name" value="P-loop containing nucleoside triphosphate hydrolases"/>
    <property type="match status" value="1"/>
</dbReference>
<dbReference type="SUPFAM" id="SSF52047">
    <property type="entry name" value="RNI-like"/>
    <property type="match status" value="2"/>
</dbReference>
<dbReference type="PROSITE" id="PS50837">
    <property type="entry name" value="NACHT"/>
    <property type="match status" value="1"/>
</dbReference>
<sequence length="1064" mass="115993">MRRRYSHDPPGSFRETKVFGFRGEYGCKALVDLLAGKGSQLLQVRDKMPDSPLGSQSNESRIPKHSEALLSRVGNDPELGSPSHRLASLMLVEGLTDLQLKEHDFTQVEATRGVWHPARVITLDRLFLPLSRVSIPPRVSLTIGVAGVGKTTLVRHFVHCWARGQVGKGFSRVLPLTFRDLNTYEKLSADRLIQSIFSSIGEASLVATAPDRVLLVLDGLDECKTPLEFSNTMACSDPKKEIQVDHLITNIIRGNLFPEISVWITSRPSAAGQIPGGLVDRMTEIRGLTEEEIKVCLEQMFPEEQNLLGQVLSQVQANRALYLMCTVPAFCRLTGLALGHLYRTRLAVQDIELPLPQTLCELYSWYFRMALGGEGQDKEKVSPRIKQVTQGARKMVGTLGRLAFHGLVKKKYVFYEQDMKAFGVDLALLQNTLCSCLLQREETLASSVAYCFIHLSLQEFVAATYYYSASKRAIFDLFTESGMSWPRLGFLAHFRCAAQRATQAKDGRLDVFLRFLSGLLSPRVNTLLAGSLLSQGEHQSYRDQVAEVLQGFLHPDAAVCARAINVLYCLSELRHTELACSVEEAMRSGTLAGMTSPSHRTALAYLLQMSDICSPEADFSLCLSQHVLQSLLPQLLYCQSLRLDNNQFQDPVMELLGSVLSGKDCRIRKISLAENQIGNKGAKALARSLLVNRSLITLDLRSNSIGPPGAKALADALKINRTLTSLSLQSNVIKDDGVMCVAEALVSNQTISMLQLQKNLIGLIGAQQMADALKQNRSLKALMFSSNTIGDRGAIALAEALKVNQILENLDLQSNSISDMGVTVLMRALCSNQTLSSLNLRENSISPEGAQALTQALCRNNTLKHLDLTANLLHDRGAQAIAVAVGENHSLTHLHLQWNFIQAGAARALGQALQLNRTLTTLDLQENAIGDEGASSVAGALKVNTTLIALYLQVASIGSQGAQALGEALTVNRTLEILDLRGNDVGAAGAKALANALKLNSSLRRLNLQENSLGMDGAIFVASALSENHGLHHINLQGNPIGESAARMISEAIKTNAPTCTVEI</sequence>
<organism>
    <name type="scientific">Mus musculus</name>
    <name type="common">Mouse</name>
    <dbReference type="NCBI Taxonomy" id="10090"/>
    <lineage>
        <taxon>Eukaryota</taxon>
        <taxon>Metazoa</taxon>
        <taxon>Chordata</taxon>
        <taxon>Craniata</taxon>
        <taxon>Vertebrata</taxon>
        <taxon>Euteleostomi</taxon>
        <taxon>Mammalia</taxon>
        <taxon>Eutheria</taxon>
        <taxon>Euarchontoglires</taxon>
        <taxon>Glires</taxon>
        <taxon>Rodentia</taxon>
        <taxon>Myomorpha</taxon>
        <taxon>Muroidea</taxon>
        <taxon>Muridae</taxon>
        <taxon>Murinae</taxon>
        <taxon>Mus</taxon>
        <taxon>Mus</taxon>
    </lineage>
</organism>
<gene>
    <name type="primary">Nlrc3</name>
</gene>
<name>NLRC3_MOUSE</name>
<comment type="function">
    <text evidence="1 3 4 5">Negative regulator of the innate immune response. Attenuates signaling pathways activated by Toll-like receptors (TLRs) and the DNA sensor STING/TMEM173 in response to pathogen-associated molecular patterns, such as intracellular poly(dA:dT), but not poly(I:C), or in response to DNA virus infection, including that of Herpes simplex virus 1 (HSV1) (PubMed:22863753, PubMed:24560620). May affect TLR4 signaling by acting at the level of TRAF6 ubiquitination, decreasing the activating 'Lys-63'-linked ubiquitination and leaving unchanged the degradative 'Lys-48'-linked ubiquitination (PubMed:22863753). Inhibits the PI3K-AKT-mTOR pathway possibly by directly interacting with the posphatidylinositol 3-kinase regulatory subunit p85 (PIK3R1/PIK3R2) and disrupting the association between PIK3R1/PIK3R2 and the catalytic subunit p110 (PIK3CA/PIK3CB/PIK3CD) and reducing PIK3R1/PIK3R2 activation. Via its regulation of the PI3K-AKT-mTOR pathway, controls cell proliferation, predominantly in intestinal epithelial cells (PubMed:27951586). May also affect NOD1- or NOD2-mediated NF-kappa-B activation (By similarity). Might also affect the inflammatory response by preventing NLRP3 inflammasome formation, CASP1 cleavage and IL1B maturation (By similarity).</text>
</comment>
<comment type="subunit">
    <text evidence="1 4 5">Directly interacts (via CARD) with TMEM173/STING; this interaction reduces TMEM173 trafficking to the perinuclear region in response to interferon stimulatory DNA. Also interacts, but to a lesser extent, with TBK1 (PubMed:24560620). Interacts with TRAF6; this interaction results in decreased TRAF6 'Lys-63'-linked polyubiquitination, but leaves 'Lys-48'-linked chains unchanged, promoting TRAF6 protein degradation (By similarity). Interacts with PIK3R1/PIK3R2; this interaction disrupts the association between PIK3R1/PIK3R2 and the p110 catalytic subunit PIK3CA/PIK3CB/PIK3CD and reduces PIK3R1/PIK3R2 activation (PubMed:27951586). Weakly interacts with PYCARD/ASC. Interacts with CASP1 and CASP5 (By similarity).</text>
</comment>
<comment type="subcellular location">
    <subcellularLocation>
        <location evidence="1">Cytoplasm</location>
    </subcellularLocation>
</comment>
<comment type="alternative products">
    <event type="alternative splicing"/>
    <isoform>
        <id>Q5DU56-1</id>
        <name>1</name>
        <sequence type="displayed"/>
    </isoform>
    <isoform>
        <id>Q5DU56-2</id>
        <name>2</name>
        <sequence type="described" ref="VSP_027141 VSP_027143 VSP_027145"/>
    </isoform>
    <isoform>
        <id>Q5DU56-3</id>
        <name>3</name>
        <sequence type="described" ref="VSP_027139 VSP_027144"/>
    </isoform>
    <isoform>
        <id>Q5DU56-4</id>
        <name>4</name>
        <sequence type="described" ref="VSP_027139 VSP_027144 VSP_027148 VSP_027149"/>
    </isoform>
    <isoform>
        <id>Q5DU56-5</id>
        <name>5</name>
        <sequence type="described" ref="VSP_027140 VSP_027142 VSP_027146 VSP_027147"/>
    </isoform>
</comment>
<comment type="tissue specificity">
    <text evidence="3">Expressed in bone marrow-derived macrophages.</text>
</comment>
<comment type="domain">
    <text evidence="1">The leucine-rich repeat domain may reduce the interaction with TMEM173/STING.</text>
</comment>
<comment type="disruption phenotype">
    <text evidence="3 4 5">No visible phenotype under basal conditions (PubMed:22863753). Mutant mice show an enhanced response to lipopolysaccharide (LPS)-induced endotoxic shock (PubMed:22863753). Herpes simplex virus 1-infected knockout mice exhibit enhanced innate immunity and reduced morbidity and viral load compared to wild-type animals (PubMed:24560620). Mutant mice are hyper-susceptible to colitis-associated colorectal tumorigenesis (PubMed:27951586).</text>
</comment>
<comment type="similarity">
    <text evidence="8">Belongs to the NLRP family.</text>
</comment>
<comment type="sequence caution" evidence="8">
    <conflict type="erroneous initiation">
        <sequence resource="EMBL-CDS" id="BAD90390"/>
    </conflict>
    <text>Extended N-terminus.</text>
</comment>
<reference key="1">
    <citation type="submission" date="2005-02" db="EMBL/GenBank/DDBJ databases">
        <title>Prediction of the coding sequences of mouse homologues of KIAA gene. The complete nucleotide sequences of mouse KIAA-homologous cDNAs identified by screening of terminal sequences of cDNA clones randomly sampled from size-fractionated libraries.</title>
        <authorList>
            <person name="Okazaki N."/>
            <person name="Kikuno R.F."/>
            <person name="Ohara R."/>
            <person name="Inamoto S."/>
            <person name="Nagase T."/>
            <person name="Ohara O."/>
            <person name="Koga H."/>
        </authorList>
    </citation>
    <scope>NUCLEOTIDE SEQUENCE [LARGE SCALE MRNA] (ISOFORM 1)</scope>
    <source>
        <tissue>Thymus</tissue>
    </source>
</reference>
<reference key="2">
    <citation type="journal article" date="2005" name="Science">
        <title>The transcriptional landscape of the mammalian genome.</title>
        <authorList>
            <person name="Carninci P."/>
            <person name="Kasukawa T."/>
            <person name="Katayama S."/>
            <person name="Gough J."/>
            <person name="Frith M.C."/>
            <person name="Maeda N."/>
            <person name="Oyama R."/>
            <person name="Ravasi T."/>
            <person name="Lenhard B."/>
            <person name="Wells C."/>
            <person name="Kodzius R."/>
            <person name="Shimokawa K."/>
            <person name="Bajic V.B."/>
            <person name="Brenner S.E."/>
            <person name="Batalov S."/>
            <person name="Forrest A.R."/>
            <person name="Zavolan M."/>
            <person name="Davis M.J."/>
            <person name="Wilming L.G."/>
            <person name="Aidinis V."/>
            <person name="Allen J.E."/>
            <person name="Ambesi-Impiombato A."/>
            <person name="Apweiler R."/>
            <person name="Aturaliya R.N."/>
            <person name="Bailey T.L."/>
            <person name="Bansal M."/>
            <person name="Baxter L."/>
            <person name="Beisel K.W."/>
            <person name="Bersano T."/>
            <person name="Bono H."/>
            <person name="Chalk A.M."/>
            <person name="Chiu K.P."/>
            <person name="Choudhary V."/>
            <person name="Christoffels A."/>
            <person name="Clutterbuck D.R."/>
            <person name="Crowe M.L."/>
            <person name="Dalla E."/>
            <person name="Dalrymple B.P."/>
            <person name="de Bono B."/>
            <person name="Della Gatta G."/>
            <person name="di Bernardo D."/>
            <person name="Down T."/>
            <person name="Engstrom P."/>
            <person name="Fagiolini M."/>
            <person name="Faulkner G."/>
            <person name="Fletcher C.F."/>
            <person name="Fukushima T."/>
            <person name="Furuno M."/>
            <person name="Futaki S."/>
            <person name="Gariboldi M."/>
            <person name="Georgii-Hemming P."/>
            <person name="Gingeras T.R."/>
            <person name="Gojobori T."/>
            <person name="Green R.E."/>
            <person name="Gustincich S."/>
            <person name="Harbers M."/>
            <person name="Hayashi Y."/>
            <person name="Hensch T.K."/>
            <person name="Hirokawa N."/>
            <person name="Hill D."/>
            <person name="Huminiecki L."/>
            <person name="Iacono M."/>
            <person name="Ikeo K."/>
            <person name="Iwama A."/>
            <person name="Ishikawa T."/>
            <person name="Jakt M."/>
            <person name="Kanapin A."/>
            <person name="Katoh M."/>
            <person name="Kawasawa Y."/>
            <person name="Kelso J."/>
            <person name="Kitamura H."/>
            <person name="Kitano H."/>
            <person name="Kollias G."/>
            <person name="Krishnan S.P."/>
            <person name="Kruger A."/>
            <person name="Kummerfeld S.K."/>
            <person name="Kurochkin I.V."/>
            <person name="Lareau L.F."/>
            <person name="Lazarevic D."/>
            <person name="Lipovich L."/>
            <person name="Liu J."/>
            <person name="Liuni S."/>
            <person name="McWilliam S."/>
            <person name="Madan Babu M."/>
            <person name="Madera M."/>
            <person name="Marchionni L."/>
            <person name="Matsuda H."/>
            <person name="Matsuzawa S."/>
            <person name="Miki H."/>
            <person name="Mignone F."/>
            <person name="Miyake S."/>
            <person name="Morris K."/>
            <person name="Mottagui-Tabar S."/>
            <person name="Mulder N."/>
            <person name="Nakano N."/>
            <person name="Nakauchi H."/>
            <person name="Ng P."/>
            <person name="Nilsson R."/>
            <person name="Nishiguchi S."/>
            <person name="Nishikawa S."/>
            <person name="Nori F."/>
            <person name="Ohara O."/>
            <person name="Okazaki Y."/>
            <person name="Orlando V."/>
            <person name="Pang K.C."/>
            <person name="Pavan W.J."/>
            <person name="Pavesi G."/>
            <person name="Pesole G."/>
            <person name="Petrovsky N."/>
            <person name="Piazza S."/>
            <person name="Reed J."/>
            <person name="Reid J.F."/>
            <person name="Ring B.Z."/>
            <person name="Ringwald M."/>
            <person name="Rost B."/>
            <person name="Ruan Y."/>
            <person name="Salzberg S.L."/>
            <person name="Sandelin A."/>
            <person name="Schneider C."/>
            <person name="Schoenbach C."/>
            <person name="Sekiguchi K."/>
            <person name="Semple C.A."/>
            <person name="Seno S."/>
            <person name="Sessa L."/>
            <person name="Sheng Y."/>
            <person name="Shibata Y."/>
            <person name="Shimada H."/>
            <person name="Shimada K."/>
            <person name="Silva D."/>
            <person name="Sinclair B."/>
            <person name="Sperling S."/>
            <person name="Stupka E."/>
            <person name="Sugiura K."/>
            <person name="Sultana R."/>
            <person name="Takenaka Y."/>
            <person name="Taki K."/>
            <person name="Tammoja K."/>
            <person name="Tan S.L."/>
            <person name="Tang S."/>
            <person name="Taylor M.S."/>
            <person name="Tegner J."/>
            <person name="Teichmann S.A."/>
            <person name="Ueda H.R."/>
            <person name="van Nimwegen E."/>
            <person name="Verardo R."/>
            <person name="Wei C.L."/>
            <person name="Yagi K."/>
            <person name="Yamanishi H."/>
            <person name="Zabarovsky E."/>
            <person name="Zhu S."/>
            <person name="Zimmer A."/>
            <person name="Hide W."/>
            <person name="Bult C."/>
            <person name="Grimmond S.M."/>
            <person name="Teasdale R.D."/>
            <person name="Liu E.T."/>
            <person name="Brusic V."/>
            <person name="Quackenbush J."/>
            <person name="Wahlestedt C."/>
            <person name="Mattick J.S."/>
            <person name="Hume D.A."/>
            <person name="Kai C."/>
            <person name="Sasaki D."/>
            <person name="Tomaru Y."/>
            <person name="Fukuda S."/>
            <person name="Kanamori-Katayama M."/>
            <person name="Suzuki M."/>
            <person name="Aoki J."/>
            <person name="Arakawa T."/>
            <person name="Iida J."/>
            <person name="Imamura K."/>
            <person name="Itoh M."/>
            <person name="Kato T."/>
            <person name="Kawaji H."/>
            <person name="Kawagashira N."/>
            <person name="Kawashima T."/>
            <person name="Kojima M."/>
            <person name="Kondo S."/>
            <person name="Konno H."/>
            <person name="Nakano K."/>
            <person name="Ninomiya N."/>
            <person name="Nishio T."/>
            <person name="Okada M."/>
            <person name="Plessy C."/>
            <person name="Shibata K."/>
            <person name="Shiraki T."/>
            <person name="Suzuki S."/>
            <person name="Tagami M."/>
            <person name="Waki K."/>
            <person name="Watahiki A."/>
            <person name="Okamura-Oho Y."/>
            <person name="Suzuki H."/>
            <person name="Kawai J."/>
            <person name="Hayashizaki Y."/>
        </authorList>
    </citation>
    <scope>NUCLEOTIDE SEQUENCE [LARGE SCALE MRNA] (ISOFORMS 2; 3 AND 4)</scope>
    <source>
        <strain>C57BL/6J</strain>
        <strain>NOD</strain>
        <tissue>Embryonic eye</tissue>
        <tissue>Spleen</tissue>
        <tissue>Thymus</tissue>
    </source>
</reference>
<reference key="3">
    <citation type="journal article" date="2004" name="Genome Res.">
        <title>The status, quality, and expansion of the NIH full-length cDNA project: the Mammalian Gene Collection (MGC).</title>
        <authorList>
            <consortium name="The MGC Project Team"/>
        </authorList>
    </citation>
    <scope>NUCLEOTIDE SEQUENCE [LARGE SCALE MRNA] (ISOFORM 5)</scope>
</reference>
<reference key="4">
    <citation type="journal article" date="2012" name="Nat. Immunol.">
        <title>The innate immune sensor NLRC3 attenuates Toll-like receptor signaling via modification of the signaling adaptor TRAF6 and transcription factor NF-kappaB.</title>
        <authorList>
            <person name="Schneider M."/>
            <person name="Zimmermann A.G."/>
            <person name="Roberts R.A."/>
            <person name="Zhang L."/>
            <person name="Swanson K.V."/>
            <person name="Wen H."/>
            <person name="Davis B.K."/>
            <person name="Allen I.C."/>
            <person name="Holl E.K."/>
            <person name="Ye Z."/>
            <person name="Rahman A.H."/>
            <person name="Conti B.J."/>
            <person name="Eitas T.K."/>
            <person name="Koller B.H."/>
            <person name="Ting J.P."/>
        </authorList>
    </citation>
    <scope>FUNCTION</scope>
    <scope>DISRUPTION PHENOTYPE</scope>
    <scope>TISSUE SPECIFICITY</scope>
</reference>
<reference key="5">
    <citation type="journal article" date="2014" name="Immunity">
        <title>NLRC3, a member of the NLR family of proteins, is a negative regulator of innate immune signaling induced by the DNA sensor STING.</title>
        <authorList>
            <person name="Zhang L."/>
            <person name="Mo J."/>
            <person name="Swanson K.V."/>
            <person name="Wen H."/>
            <person name="Petrucelli A."/>
            <person name="Gregory S.M."/>
            <person name="Zhang Z."/>
            <person name="Schneider M."/>
            <person name="Jiang Y."/>
            <person name="Fitzgerald K.A."/>
            <person name="Ouyang S."/>
            <person name="Liu Z.J."/>
            <person name="Damania B."/>
            <person name="Shu H.B."/>
            <person name="Duncan J.A."/>
            <person name="Ting J.P."/>
        </authorList>
    </citation>
    <scope>FUNCTION</scope>
    <scope>INTERACTION WITH TBK1 AND TMEM173</scope>
    <scope>DISRUPTION PHENOTYPE</scope>
</reference>
<reference key="6">
    <citation type="journal article" date="2016" name="Nature">
        <title>NLRC3 is an inhibitory sensor of PI3K-mTOR pathways in cancer.</title>
        <authorList>
            <person name="Karki R."/>
            <person name="Man S.M."/>
            <person name="Malireddi R.K."/>
            <person name="Kesavardhana S."/>
            <person name="Zhu Q."/>
            <person name="Burton A.R."/>
            <person name="Sharma B.R."/>
            <person name="Qi X."/>
            <person name="Pelletier S."/>
            <person name="Vogel P."/>
            <person name="Rosenstiel P."/>
            <person name="Kanneganti T.D."/>
        </authorList>
    </citation>
    <scope>FUNCTION</scope>
    <scope>INTERACTION WITH PIK3R1/PIK3R2</scope>
    <scope>DISRUPTION PHENOTYPE</scope>
</reference>
<protein>
    <recommendedName>
        <fullName>Protein NLRC3</fullName>
    </recommendedName>
</protein>